<evidence type="ECO:0000255" key="1">
    <source>
        <dbReference type="HAMAP-Rule" id="MF_00637"/>
    </source>
</evidence>
<accession>C1EQU8</accession>
<sequence>MRNEMNLQFSALSQNESFARVTVAAFIAQLDPTMEELTEIKTVVSEAVTNAIIHGYEGNAEGVVYISVILEEAMVKLTIRDEGIGIFNLDEARQPLFTTKPELERSGMGFTIMENFMDEVEVISNESFGTTIHLTKYLSNSNALCN</sequence>
<comment type="function">
    <text evidence="1">Binds to sigma F and blocks its ability to form an RNA polymerase holoenzyme (E-sigma F). Phosphorylates SpoIIAA on a serine residue. This phosphorylation may enable SpoIIAA to act as an anti-anti-sigma factor that counteracts SpoIIAB and thus releases sigma F from inhibition.</text>
</comment>
<comment type="catalytic activity">
    <reaction evidence="1">
        <text>L-seryl-[protein] + ATP = O-phospho-L-seryl-[protein] + ADP + H(+)</text>
        <dbReference type="Rhea" id="RHEA:17989"/>
        <dbReference type="Rhea" id="RHEA-COMP:9863"/>
        <dbReference type="Rhea" id="RHEA-COMP:11604"/>
        <dbReference type="ChEBI" id="CHEBI:15378"/>
        <dbReference type="ChEBI" id="CHEBI:29999"/>
        <dbReference type="ChEBI" id="CHEBI:30616"/>
        <dbReference type="ChEBI" id="CHEBI:83421"/>
        <dbReference type="ChEBI" id="CHEBI:456216"/>
        <dbReference type="EC" id="2.7.11.1"/>
    </reaction>
</comment>
<comment type="catalytic activity">
    <reaction evidence="1">
        <text>L-threonyl-[protein] + ATP = O-phospho-L-threonyl-[protein] + ADP + H(+)</text>
        <dbReference type="Rhea" id="RHEA:46608"/>
        <dbReference type="Rhea" id="RHEA-COMP:11060"/>
        <dbReference type="Rhea" id="RHEA-COMP:11605"/>
        <dbReference type="ChEBI" id="CHEBI:15378"/>
        <dbReference type="ChEBI" id="CHEBI:30013"/>
        <dbReference type="ChEBI" id="CHEBI:30616"/>
        <dbReference type="ChEBI" id="CHEBI:61977"/>
        <dbReference type="ChEBI" id="CHEBI:456216"/>
        <dbReference type="EC" id="2.7.11.1"/>
    </reaction>
</comment>
<comment type="similarity">
    <text evidence="1">Belongs to the anti-sigma-factor family.</text>
</comment>
<keyword id="KW-0067">ATP-binding</keyword>
<keyword id="KW-0418">Kinase</keyword>
<keyword id="KW-0547">Nucleotide-binding</keyword>
<keyword id="KW-0723">Serine/threonine-protein kinase</keyword>
<keyword id="KW-0749">Sporulation</keyword>
<keyword id="KW-0808">Transferase</keyword>
<protein>
    <recommendedName>
        <fullName evidence="1">Anti-sigma F factor</fullName>
        <ecNumber evidence="1">2.7.11.1</ecNumber>
    </recommendedName>
    <alternativeName>
        <fullName evidence="1">Stage II sporulation protein AB</fullName>
    </alternativeName>
</protein>
<organism>
    <name type="scientific">Bacillus cereus (strain 03BB102)</name>
    <dbReference type="NCBI Taxonomy" id="572264"/>
    <lineage>
        <taxon>Bacteria</taxon>
        <taxon>Bacillati</taxon>
        <taxon>Bacillota</taxon>
        <taxon>Bacilli</taxon>
        <taxon>Bacillales</taxon>
        <taxon>Bacillaceae</taxon>
        <taxon>Bacillus</taxon>
        <taxon>Bacillus cereus group</taxon>
    </lineage>
</organism>
<name>SP2AB_BACC3</name>
<reference key="1">
    <citation type="submission" date="2009-02" db="EMBL/GenBank/DDBJ databases">
        <title>Genome sequence of Bacillus cereus 03BB102.</title>
        <authorList>
            <person name="Dodson R.J."/>
            <person name="Jackson P."/>
            <person name="Munk A.C."/>
            <person name="Brettin T."/>
            <person name="Bruce D."/>
            <person name="Detter C."/>
            <person name="Tapia R."/>
            <person name="Han C."/>
            <person name="Sutton G."/>
            <person name="Sims D."/>
        </authorList>
    </citation>
    <scope>NUCLEOTIDE SEQUENCE [LARGE SCALE GENOMIC DNA]</scope>
    <source>
        <strain>03BB102</strain>
    </source>
</reference>
<dbReference type="EC" id="2.7.11.1" evidence="1"/>
<dbReference type="EMBL" id="CP001407">
    <property type="protein sequence ID" value="ACO29257.1"/>
    <property type="molecule type" value="Genomic_DNA"/>
</dbReference>
<dbReference type="RefSeq" id="WP_001243400.1">
    <property type="nucleotide sequence ID" value="NZ_CP009318.1"/>
</dbReference>
<dbReference type="SMR" id="C1EQU8"/>
<dbReference type="GeneID" id="92883500"/>
<dbReference type="KEGG" id="bcx:BCA_4186"/>
<dbReference type="PATRIC" id="fig|572264.18.peg.4137"/>
<dbReference type="Proteomes" id="UP000002210">
    <property type="component" value="Chromosome"/>
</dbReference>
<dbReference type="GO" id="GO:0005524">
    <property type="term" value="F:ATP binding"/>
    <property type="evidence" value="ECO:0007669"/>
    <property type="project" value="UniProtKB-KW"/>
</dbReference>
<dbReference type="GO" id="GO:0106310">
    <property type="term" value="F:protein serine kinase activity"/>
    <property type="evidence" value="ECO:0007669"/>
    <property type="project" value="RHEA"/>
</dbReference>
<dbReference type="GO" id="GO:0004674">
    <property type="term" value="F:protein serine/threonine kinase activity"/>
    <property type="evidence" value="ECO:0007669"/>
    <property type="project" value="UniProtKB-KW"/>
</dbReference>
<dbReference type="GO" id="GO:0016989">
    <property type="term" value="F:sigma factor antagonist activity"/>
    <property type="evidence" value="ECO:0007669"/>
    <property type="project" value="InterPro"/>
</dbReference>
<dbReference type="GO" id="GO:0030436">
    <property type="term" value="P:asexual sporulation"/>
    <property type="evidence" value="ECO:0007669"/>
    <property type="project" value="UniProtKB-UniRule"/>
</dbReference>
<dbReference type="GO" id="GO:0042174">
    <property type="term" value="P:negative regulation of sporulation resulting in formation of a cellular spore"/>
    <property type="evidence" value="ECO:0007669"/>
    <property type="project" value="InterPro"/>
</dbReference>
<dbReference type="GO" id="GO:0030435">
    <property type="term" value="P:sporulation resulting in formation of a cellular spore"/>
    <property type="evidence" value="ECO:0007669"/>
    <property type="project" value="UniProtKB-KW"/>
</dbReference>
<dbReference type="FunFam" id="3.30.565.10:FF:000022">
    <property type="entry name" value="Anti-sigma F factor"/>
    <property type="match status" value="1"/>
</dbReference>
<dbReference type="Gene3D" id="3.30.565.10">
    <property type="entry name" value="Histidine kinase-like ATPase, C-terminal domain"/>
    <property type="match status" value="1"/>
</dbReference>
<dbReference type="HAMAP" id="MF_00637">
    <property type="entry name" value="Anti_sigma_F"/>
    <property type="match status" value="1"/>
</dbReference>
<dbReference type="InterPro" id="IPR050267">
    <property type="entry name" value="Anti-sigma-factor_SerPK"/>
</dbReference>
<dbReference type="InterPro" id="IPR010194">
    <property type="entry name" value="Anti-sigma_F"/>
</dbReference>
<dbReference type="InterPro" id="IPR036890">
    <property type="entry name" value="HATPase_C_sf"/>
</dbReference>
<dbReference type="NCBIfam" id="TIGR01925">
    <property type="entry name" value="spIIAB"/>
    <property type="match status" value="1"/>
</dbReference>
<dbReference type="PANTHER" id="PTHR35526:SF3">
    <property type="entry name" value="ANTI-SIGMA-F FACTOR RSBW"/>
    <property type="match status" value="1"/>
</dbReference>
<dbReference type="PANTHER" id="PTHR35526">
    <property type="entry name" value="ANTI-SIGMA-F FACTOR RSBW-RELATED"/>
    <property type="match status" value="1"/>
</dbReference>
<dbReference type="Pfam" id="PF13581">
    <property type="entry name" value="HATPase_c_2"/>
    <property type="match status" value="1"/>
</dbReference>
<dbReference type="SMART" id="SM00387">
    <property type="entry name" value="HATPase_c"/>
    <property type="match status" value="1"/>
</dbReference>
<dbReference type="SUPFAM" id="SSF55874">
    <property type="entry name" value="ATPase domain of HSP90 chaperone/DNA topoisomerase II/histidine kinase"/>
    <property type="match status" value="1"/>
</dbReference>
<proteinExistence type="inferred from homology"/>
<gene>
    <name evidence="1" type="primary">spoIIAB</name>
    <name type="ordered locus">BCA_4186</name>
</gene>
<feature type="chain" id="PRO_1000147381" description="Anti-sigma F factor">
    <location>
        <begin position="1"/>
        <end position="146"/>
    </location>
</feature>